<dbReference type="EMBL" id="CP000857">
    <property type="protein sequence ID" value="ACN45161.1"/>
    <property type="molecule type" value="Genomic_DNA"/>
</dbReference>
<dbReference type="RefSeq" id="WP_000572730.1">
    <property type="nucleotide sequence ID" value="NC_012125.1"/>
</dbReference>
<dbReference type="SMR" id="C0PXW1"/>
<dbReference type="KEGG" id="sei:SPC_0995"/>
<dbReference type="HOGENOM" id="CLU_004430_0_0_6"/>
<dbReference type="Proteomes" id="UP000001599">
    <property type="component" value="Chromosome"/>
</dbReference>
<dbReference type="GO" id="GO:0005737">
    <property type="term" value="C:cytoplasm"/>
    <property type="evidence" value="ECO:0007669"/>
    <property type="project" value="UniProtKB-UniRule"/>
</dbReference>
<dbReference type="GO" id="GO:0009295">
    <property type="term" value="C:nucleoid"/>
    <property type="evidence" value="ECO:0007669"/>
    <property type="project" value="UniProtKB-SubCell"/>
</dbReference>
<dbReference type="GO" id="GO:0005524">
    <property type="term" value="F:ATP binding"/>
    <property type="evidence" value="ECO:0007669"/>
    <property type="project" value="UniProtKB-UniRule"/>
</dbReference>
<dbReference type="GO" id="GO:0003677">
    <property type="term" value="F:DNA binding"/>
    <property type="evidence" value="ECO:0007669"/>
    <property type="project" value="UniProtKB-UniRule"/>
</dbReference>
<dbReference type="GO" id="GO:0051301">
    <property type="term" value="P:cell division"/>
    <property type="evidence" value="ECO:0007669"/>
    <property type="project" value="UniProtKB-KW"/>
</dbReference>
<dbReference type="GO" id="GO:0030261">
    <property type="term" value="P:chromosome condensation"/>
    <property type="evidence" value="ECO:0007669"/>
    <property type="project" value="UniProtKB-KW"/>
</dbReference>
<dbReference type="GO" id="GO:0007059">
    <property type="term" value="P:chromosome segregation"/>
    <property type="evidence" value="ECO:0007669"/>
    <property type="project" value="UniProtKB-UniRule"/>
</dbReference>
<dbReference type="GO" id="GO:0006260">
    <property type="term" value="P:DNA replication"/>
    <property type="evidence" value="ECO:0007669"/>
    <property type="project" value="UniProtKB-UniRule"/>
</dbReference>
<dbReference type="FunFam" id="3.30.70.3500:FF:000001">
    <property type="entry name" value="Chromosome partition protein MukB"/>
    <property type="match status" value="1"/>
</dbReference>
<dbReference type="FunFam" id="3.40.1140.10:FF:000001">
    <property type="entry name" value="Chromosome partition protein MukB"/>
    <property type="match status" value="1"/>
</dbReference>
<dbReference type="FunFam" id="3.40.1140.10:FF:000002">
    <property type="entry name" value="Chromosome partition protein MukB"/>
    <property type="match status" value="1"/>
</dbReference>
<dbReference type="Gene3D" id="1.10.287.1490">
    <property type="match status" value="1"/>
</dbReference>
<dbReference type="Gene3D" id="1.20.58.850">
    <property type="match status" value="1"/>
</dbReference>
<dbReference type="Gene3D" id="3.40.1140.10">
    <property type="match status" value="2"/>
</dbReference>
<dbReference type="Gene3D" id="1.20.5.420">
    <property type="entry name" value="Immunoglobulin FC, subunit C"/>
    <property type="match status" value="1"/>
</dbReference>
<dbReference type="Gene3D" id="3.30.70.3500">
    <property type="entry name" value="MukB, hinge domain"/>
    <property type="match status" value="1"/>
</dbReference>
<dbReference type="HAMAP" id="MF_01800">
    <property type="entry name" value="MukB"/>
    <property type="match status" value="1"/>
</dbReference>
<dbReference type="InterPro" id="IPR012090">
    <property type="entry name" value="MukB"/>
</dbReference>
<dbReference type="InterPro" id="IPR050308">
    <property type="entry name" value="MukB/SMC"/>
</dbReference>
<dbReference type="InterPro" id="IPR032520">
    <property type="entry name" value="MukB_hinge"/>
</dbReference>
<dbReference type="InterPro" id="IPR042501">
    <property type="entry name" value="MukB_hinge_sf"/>
</dbReference>
<dbReference type="InterPro" id="IPR007406">
    <property type="entry name" value="MukB_N_dom"/>
</dbReference>
<dbReference type="InterPro" id="IPR027417">
    <property type="entry name" value="P-loop_NTPase"/>
</dbReference>
<dbReference type="NCBIfam" id="NF003422">
    <property type="entry name" value="PRK04863.1"/>
    <property type="match status" value="1"/>
</dbReference>
<dbReference type="PANTHER" id="PTHR42963">
    <property type="entry name" value="CHROMOSOME PARTITION PROTEIN MUKB"/>
    <property type="match status" value="1"/>
</dbReference>
<dbReference type="PANTHER" id="PTHR42963:SF1">
    <property type="entry name" value="DUF4476 DOMAIN-CONTAINING PROTEIN"/>
    <property type="match status" value="1"/>
</dbReference>
<dbReference type="Pfam" id="PF04310">
    <property type="entry name" value="MukB"/>
    <property type="match status" value="1"/>
</dbReference>
<dbReference type="Pfam" id="PF16330">
    <property type="entry name" value="MukB_hinge"/>
    <property type="match status" value="1"/>
</dbReference>
<dbReference type="Pfam" id="PF13558">
    <property type="entry name" value="SbcC_Walker_B"/>
    <property type="match status" value="1"/>
</dbReference>
<dbReference type="PIRSF" id="PIRSF005246">
    <property type="entry name" value="MukB"/>
    <property type="match status" value="1"/>
</dbReference>
<dbReference type="SUPFAM" id="SSF52540">
    <property type="entry name" value="P-loop containing nucleoside triphosphate hydrolases"/>
    <property type="match status" value="2"/>
</dbReference>
<protein>
    <recommendedName>
        <fullName evidence="1">Chromosome partition protein MukB</fullName>
    </recommendedName>
    <alternativeName>
        <fullName evidence="1">Structural maintenance of chromosome-related protein</fullName>
    </alternativeName>
</protein>
<proteinExistence type="inferred from homology"/>
<evidence type="ECO:0000255" key="1">
    <source>
        <dbReference type="HAMAP-Rule" id="MF_01800"/>
    </source>
</evidence>
<sequence>MIERGKFRSLTLINWNGFFARTFDLDELVTTLSGGNGAGKSTTMAAFVTALIPDLTLLHFRNTTEAGATSGSRDKGLHGKLKAGVCYSMLDTINSRHQRVVVGVRLQQVAGRDRKVDIKPFAIQGLPMSVQPTQLVTETLNERQARVLSLAELKDKLDEMEGVQFKQFNSITDYHSLMFDLGIIARRLRSASDRSKFYRLIEASLYGGISSAITRSLRDYLLPENSGVRKAFQDMEAALRENRLTLEAIRVTQSDRDLFKHLISEATDYVAADYMRHANERRVHLDQALAFRRELYTSRKQLAAEQYKHVDMARELGEHNGAEGSLEADYQAASDHLNLVQTALRQQEKIERYEADLEELQIRLEEQNEVVAEAAEMQDENEARAEAAELEVDELKSQLADDQQALDVQQTRAIQYNQAISALARAKELCHLPDLTPESAAEWLDTFQAKEQEATEKLLSLEQKMSVAQTAHSQFEQAYQLVAAINGPLARSEAWDVARELLRDGVNQRHLAEQVQPLRMRLSELEQRLREQQEAERLLAEFCKRQGKNFDIDELEALHQELEARIASLSESVSSASEQRMALRQEQEQLQSRIQHLMRRAPVWLAAQNSLNQLSEQCGEEFTSSQEVTEYLQQLLEREREAIVERDEVGARKNAVDEEIERLSQPGGAEDQRLNALAERFGGVLLSEIYDDVSLEDAPYFSALYGPSRHAIVVPDLSQIAEQLEGLTDCPEDLYLIEGDPQSFDDSVFSVDELEKAVVVKIADRQWRYSRFPSLPIFGRAARENRIESLHAEREVLSERFATLSFDVQKTQRLHQAFSRFIGSHLSVAFEDDPEAEIRRLNGRRVELERALATHENDNQQQRLQFEQAKEGVSALNRLLPRLNLLADETLADRVDEIQERLDEAQEAARFVQQYGNQLAKLEPVVSVLQSDPEQFEQLKEDYAWSQQMQRDARQQAFALAEVVERRAHFSYSDSAEMLSGNSDLNEKLRQRLEQAEAERTRAREALRSHAAQLSQYSQVLASLKSSYDTKKELLNDLQRELQDIGVRADSGAEERARQRRDELHAQLSNNRSRRNQLEKALTFCEAEMENLTRKLRKLERDYHEMREQVVTAKAGWCAVMRMVKDNGVERRLHRRELAYLSADELRSMSDKALGALRLAIADNEHLRDVLRLSEDPKRPERKIQFFVAVYQHLRERIRQDIIRTDDPVEAIEQMEIELSRLTEELTSREQKLAISSRSVANIIRKTIQREQNRIRMLNQGLQSVSFGQVNSVRLNVNVRETHATLLDVLSEQQEQHQDLFNSNRLTFSEALAKLYQRLNPQIDMGQRTPQTIGEELLDYRNYLEMEVEVNRGSDGWLRAESGALSTGEAIGTGMSILVMVVQSWEDEARRLRGKDISPCRLLFLDEAARLDARSIATLFELCERLQMQLIIAAPENISPEKGTTYKLVRKVFQNTEHVHVVGLRGFAPQLPETLPGTQTEDTPSEAS</sequence>
<feature type="chain" id="PRO_1000187487" description="Chromosome partition protein MukB">
    <location>
        <begin position="1"/>
        <end position="1488"/>
    </location>
</feature>
<feature type="region of interest" description="Flexible hinge" evidence="1">
    <location>
        <begin position="666"/>
        <end position="783"/>
    </location>
</feature>
<feature type="coiled-coil region" evidence="1">
    <location>
        <begin position="326"/>
        <end position="413"/>
    </location>
</feature>
<feature type="coiled-coil region" evidence="1">
    <location>
        <begin position="444"/>
        <end position="472"/>
    </location>
</feature>
<feature type="coiled-coil region" evidence="1">
    <location>
        <begin position="509"/>
        <end position="602"/>
    </location>
</feature>
<feature type="coiled-coil region" evidence="1">
    <location>
        <begin position="835"/>
        <end position="923"/>
    </location>
</feature>
<feature type="coiled-coil region" evidence="1">
    <location>
        <begin position="977"/>
        <end position="1116"/>
    </location>
</feature>
<feature type="coiled-coil region" evidence="1">
    <location>
        <begin position="1209"/>
        <end position="1265"/>
    </location>
</feature>
<feature type="binding site" evidence="1">
    <location>
        <begin position="34"/>
        <end position="41"/>
    </location>
    <ligand>
        <name>ATP</name>
        <dbReference type="ChEBI" id="CHEBI:30616"/>
    </ligand>
</feature>
<keyword id="KW-0067">ATP-binding</keyword>
<keyword id="KW-0131">Cell cycle</keyword>
<keyword id="KW-0132">Cell division</keyword>
<keyword id="KW-0159">Chromosome partition</keyword>
<keyword id="KW-0175">Coiled coil</keyword>
<keyword id="KW-0963">Cytoplasm</keyword>
<keyword id="KW-0226">DNA condensation</keyword>
<keyword id="KW-0238">DNA-binding</keyword>
<keyword id="KW-0547">Nucleotide-binding</keyword>
<organism>
    <name type="scientific">Salmonella paratyphi C (strain RKS4594)</name>
    <dbReference type="NCBI Taxonomy" id="476213"/>
    <lineage>
        <taxon>Bacteria</taxon>
        <taxon>Pseudomonadati</taxon>
        <taxon>Pseudomonadota</taxon>
        <taxon>Gammaproteobacteria</taxon>
        <taxon>Enterobacterales</taxon>
        <taxon>Enterobacteriaceae</taxon>
        <taxon>Salmonella</taxon>
    </lineage>
</organism>
<comment type="function">
    <text evidence="1">Plays a central role in chromosome condensation, segregation and cell cycle progression. Functions as a homodimer, which is essential for chromosome partition. Involved in negative DNA supercoiling in vivo, and by this means organize and compact chromosomes. May achieve or facilitate chromosome segregation by condensation DNA from both sides of a centrally located replisome during cell division.</text>
</comment>
<comment type="subunit">
    <text evidence="1">Homodimerization via its hinge domain. Binds to DNA via its C-terminal region. Interacts, and probably forms a ternary complex, with MukE and MukF via its C-terminal region. The complex formation is stimulated by calcium or magnesium. Interacts with tubulin-related protein FtsZ.</text>
</comment>
<comment type="subcellular location">
    <subcellularLocation>
        <location evidence="1">Cytoplasm</location>
        <location evidence="1">Nucleoid</location>
    </subcellularLocation>
    <text evidence="1">Restricted to the nucleoid region.</text>
</comment>
<comment type="domain">
    <text evidence="1">The hinge domain, which separates the large intramolecular coiled coil regions, allows the homodimerization, forming a V-shaped homodimer.</text>
</comment>
<comment type="similarity">
    <text evidence="1">Belongs to the SMC family. MukB subfamily.</text>
</comment>
<reference key="1">
    <citation type="journal article" date="2009" name="PLoS ONE">
        <title>Salmonella paratyphi C: genetic divergence from Salmonella choleraesuis and pathogenic convergence with Salmonella typhi.</title>
        <authorList>
            <person name="Liu W.-Q."/>
            <person name="Feng Y."/>
            <person name="Wang Y."/>
            <person name="Zou Q.-H."/>
            <person name="Chen F."/>
            <person name="Guo J.-T."/>
            <person name="Peng Y.-H."/>
            <person name="Jin Y."/>
            <person name="Li Y.-G."/>
            <person name="Hu S.-N."/>
            <person name="Johnston R.N."/>
            <person name="Liu G.-R."/>
            <person name="Liu S.-L."/>
        </authorList>
    </citation>
    <scope>NUCLEOTIDE SEQUENCE [LARGE SCALE GENOMIC DNA]</scope>
    <source>
        <strain>RKS4594</strain>
    </source>
</reference>
<name>MUKB_SALPC</name>
<accession>C0PXW1</accession>
<gene>
    <name evidence="1" type="primary">mukB</name>
    <name type="ordered locus">SPC_0995</name>
</gene>